<dbReference type="EC" id="3.1.-.-" evidence="1"/>
<dbReference type="EMBL" id="CH963849">
    <property type="protein sequence ID" value="EDW74623.1"/>
    <property type="molecule type" value="Genomic_DNA"/>
</dbReference>
<dbReference type="SMR" id="B4MR84"/>
<dbReference type="STRING" id="7260.B4MR84"/>
<dbReference type="EnsemblMetazoa" id="FBtr0251966">
    <property type="protein sequence ID" value="FBpp0250458"/>
    <property type="gene ID" value="FBgn0223307"/>
</dbReference>
<dbReference type="EnsemblMetazoa" id="XM_002063601.4">
    <property type="protein sequence ID" value="XP_002063637.1"/>
    <property type="gene ID" value="LOC6639956"/>
</dbReference>
<dbReference type="GeneID" id="6639956"/>
<dbReference type="KEGG" id="dwi:6639956"/>
<dbReference type="CTD" id="2237"/>
<dbReference type="eggNOG" id="KOG2519">
    <property type="taxonomic scope" value="Eukaryota"/>
</dbReference>
<dbReference type="HOGENOM" id="CLU_032444_2_0_1"/>
<dbReference type="OMA" id="MGIPWVQ"/>
<dbReference type="OrthoDB" id="1937206at2759"/>
<dbReference type="PhylomeDB" id="B4MR84"/>
<dbReference type="Proteomes" id="UP000007798">
    <property type="component" value="Unassembled WGS sequence"/>
</dbReference>
<dbReference type="GO" id="GO:0005739">
    <property type="term" value="C:mitochondrion"/>
    <property type="evidence" value="ECO:0007669"/>
    <property type="project" value="UniProtKB-SubCell"/>
</dbReference>
<dbReference type="GO" id="GO:0005730">
    <property type="term" value="C:nucleolus"/>
    <property type="evidence" value="ECO:0007669"/>
    <property type="project" value="UniProtKB-SubCell"/>
</dbReference>
<dbReference type="GO" id="GO:0005654">
    <property type="term" value="C:nucleoplasm"/>
    <property type="evidence" value="ECO:0007669"/>
    <property type="project" value="UniProtKB-SubCell"/>
</dbReference>
<dbReference type="GO" id="GO:0008409">
    <property type="term" value="F:5'-3' exonuclease activity"/>
    <property type="evidence" value="ECO:0007669"/>
    <property type="project" value="UniProtKB-UniRule"/>
</dbReference>
<dbReference type="GO" id="GO:0017108">
    <property type="term" value="F:5'-flap endonuclease activity"/>
    <property type="evidence" value="ECO:0007669"/>
    <property type="project" value="UniProtKB-UniRule"/>
</dbReference>
<dbReference type="GO" id="GO:0003677">
    <property type="term" value="F:DNA binding"/>
    <property type="evidence" value="ECO:0007669"/>
    <property type="project" value="UniProtKB-UniRule"/>
</dbReference>
<dbReference type="GO" id="GO:0000287">
    <property type="term" value="F:magnesium ion binding"/>
    <property type="evidence" value="ECO:0007669"/>
    <property type="project" value="UniProtKB-UniRule"/>
</dbReference>
<dbReference type="GO" id="GO:0030145">
    <property type="term" value="F:manganese ion binding"/>
    <property type="evidence" value="ECO:0007669"/>
    <property type="project" value="TreeGrafter"/>
</dbReference>
<dbReference type="GO" id="GO:0004523">
    <property type="term" value="F:RNA-DNA hybrid ribonuclease activity"/>
    <property type="evidence" value="ECO:0007669"/>
    <property type="project" value="TreeGrafter"/>
</dbReference>
<dbReference type="GO" id="GO:0006284">
    <property type="term" value="P:base-excision repair"/>
    <property type="evidence" value="ECO:0007669"/>
    <property type="project" value="UniProtKB-UniRule"/>
</dbReference>
<dbReference type="GO" id="GO:0043137">
    <property type="term" value="P:DNA replication, removal of RNA primer"/>
    <property type="evidence" value="ECO:0007669"/>
    <property type="project" value="UniProtKB-UniRule"/>
</dbReference>
<dbReference type="CDD" id="cd09867">
    <property type="entry name" value="PIN_FEN1"/>
    <property type="match status" value="1"/>
</dbReference>
<dbReference type="FunFam" id="1.10.150.20:FF:000009">
    <property type="entry name" value="Flap endonuclease 1"/>
    <property type="match status" value="1"/>
</dbReference>
<dbReference type="FunFam" id="3.40.50.1010:FF:000003">
    <property type="entry name" value="Flap endonuclease 1"/>
    <property type="match status" value="1"/>
</dbReference>
<dbReference type="Gene3D" id="1.10.150.20">
    <property type="entry name" value="5' to 3' exonuclease, C-terminal subdomain"/>
    <property type="match status" value="1"/>
</dbReference>
<dbReference type="Gene3D" id="3.40.50.1010">
    <property type="entry name" value="5'-nuclease"/>
    <property type="match status" value="1"/>
</dbReference>
<dbReference type="HAMAP" id="MF_00614">
    <property type="entry name" value="Fen"/>
    <property type="match status" value="1"/>
</dbReference>
<dbReference type="InterPro" id="IPR036279">
    <property type="entry name" value="5-3_exonuclease_C_sf"/>
</dbReference>
<dbReference type="InterPro" id="IPR023426">
    <property type="entry name" value="Flap_endonuc"/>
</dbReference>
<dbReference type="InterPro" id="IPR008918">
    <property type="entry name" value="HhH2"/>
</dbReference>
<dbReference type="InterPro" id="IPR029060">
    <property type="entry name" value="PIN-like_dom_sf"/>
</dbReference>
<dbReference type="InterPro" id="IPR006086">
    <property type="entry name" value="XPG-I_dom"/>
</dbReference>
<dbReference type="InterPro" id="IPR006084">
    <property type="entry name" value="XPG/Rad2"/>
</dbReference>
<dbReference type="InterPro" id="IPR019974">
    <property type="entry name" value="XPG_CS"/>
</dbReference>
<dbReference type="InterPro" id="IPR006085">
    <property type="entry name" value="XPG_DNA_repair_N"/>
</dbReference>
<dbReference type="PANTHER" id="PTHR11081:SF9">
    <property type="entry name" value="FLAP ENDONUCLEASE 1"/>
    <property type="match status" value="1"/>
</dbReference>
<dbReference type="PANTHER" id="PTHR11081">
    <property type="entry name" value="FLAP ENDONUCLEASE FAMILY MEMBER"/>
    <property type="match status" value="1"/>
</dbReference>
<dbReference type="Pfam" id="PF00867">
    <property type="entry name" value="XPG_I"/>
    <property type="match status" value="1"/>
</dbReference>
<dbReference type="Pfam" id="PF00752">
    <property type="entry name" value="XPG_N"/>
    <property type="match status" value="1"/>
</dbReference>
<dbReference type="PRINTS" id="PR00853">
    <property type="entry name" value="XPGRADSUPER"/>
</dbReference>
<dbReference type="SMART" id="SM00279">
    <property type="entry name" value="HhH2"/>
    <property type="match status" value="1"/>
</dbReference>
<dbReference type="SMART" id="SM00484">
    <property type="entry name" value="XPGI"/>
    <property type="match status" value="1"/>
</dbReference>
<dbReference type="SMART" id="SM00485">
    <property type="entry name" value="XPGN"/>
    <property type="match status" value="1"/>
</dbReference>
<dbReference type="SUPFAM" id="SSF47807">
    <property type="entry name" value="5' to 3' exonuclease, C-terminal subdomain"/>
    <property type="match status" value="1"/>
</dbReference>
<dbReference type="SUPFAM" id="SSF88723">
    <property type="entry name" value="PIN domain-like"/>
    <property type="match status" value="1"/>
</dbReference>
<dbReference type="PROSITE" id="PS00841">
    <property type="entry name" value="XPG_1"/>
    <property type="match status" value="1"/>
</dbReference>
<dbReference type="PROSITE" id="PS00842">
    <property type="entry name" value="XPG_2"/>
    <property type="match status" value="1"/>
</dbReference>
<organism>
    <name type="scientific">Drosophila willistoni</name>
    <name type="common">Fruit fly</name>
    <dbReference type="NCBI Taxonomy" id="7260"/>
    <lineage>
        <taxon>Eukaryota</taxon>
        <taxon>Metazoa</taxon>
        <taxon>Ecdysozoa</taxon>
        <taxon>Arthropoda</taxon>
        <taxon>Hexapoda</taxon>
        <taxon>Insecta</taxon>
        <taxon>Pterygota</taxon>
        <taxon>Neoptera</taxon>
        <taxon>Endopterygota</taxon>
        <taxon>Diptera</taxon>
        <taxon>Brachycera</taxon>
        <taxon>Muscomorpha</taxon>
        <taxon>Ephydroidea</taxon>
        <taxon>Drosophilidae</taxon>
        <taxon>Drosophila</taxon>
        <taxon>Sophophora</taxon>
    </lineage>
</organism>
<proteinExistence type="inferred from homology"/>
<protein>
    <recommendedName>
        <fullName evidence="1">Flap endonuclease 1</fullName>
        <shortName evidence="1">FEN-1</shortName>
        <ecNumber evidence="1">3.1.-.-</ecNumber>
    </recommendedName>
    <alternativeName>
        <fullName evidence="1">Flap structure-specific endonuclease 1</fullName>
    </alternativeName>
</protein>
<gene>
    <name evidence="1" type="primary">Fen1</name>
    <name type="ORF">GK21315</name>
</gene>
<reference key="1">
    <citation type="journal article" date="2007" name="Nature">
        <title>Evolution of genes and genomes on the Drosophila phylogeny.</title>
        <authorList>
            <consortium name="Drosophila 12 genomes consortium"/>
        </authorList>
    </citation>
    <scope>NUCLEOTIDE SEQUENCE [LARGE SCALE GENOMIC DNA]</scope>
    <source>
        <strain>Tucson 14030-0811.24</strain>
    </source>
</reference>
<comment type="function">
    <text evidence="1">Structure-specific nuclease with 5'-flap endonuclease and 5'-3' exonuclease activities involved in DNA replication and repair. During DNA replication, cleaves the 5'-overhanging flap structure that is generated by displacement synthesis when DNA polymerase encounters the 5'-end of a downstream Okazaki fragment. It enters the flap from the 5'-end and then tracks to cleave the flap base, leaving a nick for ligation. Also involved in the long patch base excision repair (LP-BER) pathway, by cleaving within the apurinic/apyrimidinic (AP) site-terminated flap. Acts as a genome stabilization factor that prevents flaps from equilibrating into structures that lead to duplications and deletions. Also possesses 5'-3' exonuclease activity on nicked or gapped double-stranded DNA, and exhibits RNase H activity. Also involved in replication and repair of rDNA and in repairing mitochondrial DNA.</text>
</comment>
<comment type="cofactor">
    <cofactor evidence="1">
        <name>Mg(2+)</name>
        <dbReference type="ChEBI" id="CHEBI:18420"/>
    </cofactor>
    <text evidence="1">Binds 2 magnesium ions per subunit. They probably participate in the reaction catalyzed by the enzyme. May bind an additional third magnesium ion after substrate binding.</text>
</comment>
<comment type="subunit">
    <text evidence="1">Interacts with PCNA. Three molecules of FEN1 bind to one PCNA trimer with each molecule binding to one PCNA monomer. PCNA stimulates the nuclease activity without altering cleavage specificity.</text>
</comment>
<comment type="subcellular location">
    <subcellularLocation>
        <location evidence="1">Nucleus</location>
        <location evidence="1">Nucleolus</location>
    </subcellularLocation>
    <subcellularLocation>
        <location evidence="1">Nucleus</location>
        <location evidence="1">Nucleoplasm</location>
    </subcellularLocation>
    <subcellularLocation>
        <location evidence="1">Mitochondrion</location>
    </subcellularLocation>
    <text evidence="1">Resides mostly in the nucleoli and relocalizes to the nucleoplasm upon DNA damage.</text>
</comment>
<comment type="PTM">
    <text evidence="1">Phosphorylated. Phosphorylation upon DNA damage induces relocalization to the nuclear plasma.</text>
</comment>
<comment type="similarity">
    <text evidence="1">Belongs to the XPG/RAD2 endonuclease family. FEN1 subfamily.</text>
</comment>
<feature type="chain" id="PRO_0000403507" description="Flap endonuclease 1">
    <location>
        <begin position="1"/>
        <end position="388"/>
    </location>
</feature>
<feature type="region of interest" description="N-domain">
    <location>
        <begin position="1"/>
        <end position="104"/>
    </location>
</feature>
<feature type="region of interest" description="I-domain">
    <location>
        <begin position="122"/>
        <end position="253"/>
    </location>
</feature>
<feature type="region of interest" description="Interaction with PCNA" evidence="1">
    <location>
        <begin position="336"/>
        <end position="344"/>
    </location>
</feature>
<feature type="region of interest" description="Disordered" evidence="2">
    <location>
        <begin position="355"/>
        <end position="388"/>
    </location>
</feature>
<feature type="binding site" evidence="1">
    <location>
        <position position="34"/>
    </location>
    <ligand>
        <name>Mg(2+)</name>
        <dbReference type="ChEBI" id="CHEBI:18420"/>
        <label>1</label>
    </ligand>
</feature>
<feature type="binding site" evidence="1">
    <location>
        <position position="47"/>
    </location>
    <ligand>
        <name>DNA</name>
        <dbReference type="ChEBI" id="CHEBI:16991"/>
    </ligand>
</feature>
<feature type="binding site" evidence="1">
    <location>
        <position position="70"/>
    </location>
    <ligand>
        <name>DNA</name>
        <dbReference type="ChEBI" id="CHEBI:16991"/>
    </ligand>
</feature>
<feature type="binding site" evidence="1">
    <location>
        <position position="86"/>
    </location>
    <ligand>
        <name>Mg(2+)</name>
        <dbReference type="ChEBI" id="CHEBI:18420"/>
        <label>1</label>
    </ligand>
</feature>
<feature type="binding site" evidence="1">
    <location>
        <position position="158"/>
    </location>
    <ligand>
        <name>DNA</name>
        <dbReference type="ChEBI" id="CHEBI:16991"/>
    </ligand>
</feature>
<feature type="binding site" evidence="1">
    <location>
        <position position="158"/>
    </location>
    <ligand>
        <name>Mg(2+)</name>
        <dbReference type="ChEBI" id="CHEBI:18420"/>
        <label>1</label>
    </ligand>
</feature>
<feature type="binding site" evidence="1">
    <location>
        <position position="160"/>
    </location>
    <ligand>
        <name>Mg(2+)</name>
        <dbReference type="ChEBI" id="CHEBI:18420"/>
        <label>1</label>
    </ligand>
</feature>
<feature type="binding site" evidence="1">
    <location>
        <position position="179"/>
    </location>
    <ligand>
        <name>Mg(2+)</name>
        <dbReference type="ChEBI" id="CHEBI:18420"/>
        <label>2</label>
    </ligand>
</feature>
<feature type="binding site" evidence="1">
    <location>
        <position position="181"/>
    </location>
    <ligand>
        <name>Mg(2+)</name>
        <dbReference type="ChEBI" id="CHEBI:18420"/>
        <label>2</label>
    </ligand>
</feature>
<feature type="binding site" evidence="1">
    <location>
        <position position="231"/>
    </location>
    <ligand>
        <name>DNA</name>
        <dbReference type="ChEBI" id="CHEBI:16991"/>
    </ligand>
</feature>
<feature type="binding site" evidence="1">
    <location>
        <position position="233"/>
    </location>
    <ligand>
        <name>DNA</name>
        <dbReference type="ChEBI" id="CHEBI:16991"/>
    </ligand>
</feature>
<feature type="binding site" evidence="1">
    <location>
        <position position="233"/>
    </location>
    <ligand>
        <name>Mg(2+)</name>
        <dbReference type="ChEBI" id="CHEBI:18420"/>
        <label>2</label>
    </ligand>
</feature>
<evidence type="ECO:0000255" key="1">
    <source>
        <dbReference type="HAMAP-Rule" id="MF_03140"/>
    </source>
</evidence>
<evidence type="ECO:0000256" key="2">
    <source>
        <dbReference type="SAM" id="MobiDB-lite"/>
    </source>
</evidence>
<accession>B4MR84</accession>
<keyword id="KW-0227">DNA damage</keyword>
<keyword id="KW-0234">DNA repair</keyword>
<keyword id="KW-0235">DNA replication</keyword>
<keyword id="KW-0255">Endonuclease</keyword>
<keyword id="KW-0269">Exonuclease</keyword>
<keyword id="KW-0378">Hydrolase</keyword>
<keyword id="KW-0460">Magnesium</keyword>
<keyword id="KW-0479">Metal-binding</keyword>
<keyword id="KW-0496">Mitochondrion</keyword>
<keyword id="KW-0540">Nuclease</keyword>
<keyword id="KW-0539">Nucleus</keyword>
<keyword id="KW-0597">Phosphoprotein</keyword>
<keyword id="KW-1185">Reference proteome</keyword>
<name>FEN1_DROWI</name>
<sequence>MGILGLSKLIADLAPQAIRESEIKNFFGRKVAIDASMCLYQFLIAVRSEGAQLATVNGDPTSHLMGMFYRTIRLLDNGIKPVYVFDGKPPDLKSGELAKRAERREEAEKALKAATEAGDEAEIEKFNRRLVRVTKEHAREAKELLKLMGVPYVDAPCEAEAQCAALVKAGKVYATATEDMDALTFGSSKLLRYLTYSEARKMPVKEFTYEKLLQGLELNQREFIDLCILLGCDYCESIKGIGPKRAIELINSYRDIETILDNLDTSKYTVPENWNYKVARELFIEPEVADASAIDLKWTEPDEEGLVKFLCGERQFSEERVRGGAKKLLKSKKAQTQVRLDSFFQTLPSSPNAVAAAKRKAEEAKKSANNKKAKIGGGGGAGRGRRPK</sequence>